<protein>
    <recommendedName>
        <fullName evidence="2">Translation initiation factor IF-1</fullName>
    </recommendedName>
</protein>
<sequence>MAKEDCIEMQGTILETLPNTMFRVELENGHVVTAHISGKMRKNYIRILTGDKVTIEMTPYDLNKGRIIFRSR</sequence>
<dbReference type="EMBL" id="AE004439">
    <property type="protein sequence ID" value="AAK03115.1"/>
    <property type="molecule type" value="Genomic_DNA"/>
</dbReference>
<dbReference type="RefSeq" id="WP_005717339.1">
    <property type="nucleotide sequence ID" value="NC_002663.1"/>
</dbReference>
<dbReference type="SMR" id="P57898"/>
<dbReference type="STRING" id="272843.PM1031"/>
<dbReference type="EnsemblBacteria" id="AAK03115">
    <property type="protein sequence ID" value="AAK03115"/>
    <property type="gene ID" value="PM1031"/>
</dbReference>
<dbReference type="GeneID" id="77206346"/>
<dbReference type="KEGG" id="pmu:PM1031"/>
<dbReference type="HOGENOM" id="CLU_151267_1_0_6"/>
<dbReference type="OrthoDB" id="9803250at2"/>
<dbReference type="Proteomes" id="UP000000809">
    <property type="component" value="Chromosome"/>
</dbReference>
<dbReference type="GO" id="GO:0005829">
    <property type="term" value="C:cytosol"/>
    <property type="evidence" value="ECO:0007669"/>
    <property type="project" value="TreeGrafter"/>
</dbReference>
<dbReference type="GO" id="GO:0043022">
    <property type="term" value="F:ribosome binding"/>
    <property type="evidence" value="ECO:0007669"/>
    <property type="project" value="UniProtKB-UniRule"/>
</dbReference>
<dbReference type="GO" id="GO:0019843">
    <property type="term" value="F:rRNA binding"/>
    <property type="evidence" value="ECO:0007669"/>
    <property type="project" value="UniProtKB-UniRule"/>
</dbReference>
<dbReference type="GO" id="GO:0003743">
    <property type="term" value="F:translation initiation factor activity"/>
    <property type="evidence" value="ECO:0007669"/>
    <property type="project" value="UniProtKB-UniRule"/>
</dbReference>
<dbReference type="CDD" id="cd04451">
    <property type="entry name" value="S1_IF1"/>
    <property type="match status" value="1"/>
</dbReference>
<dbReference type="FunFam" id="2.40.50.140:FF:000002">
    <property type="entry name" value="Translation initiation factor IF-1"/>
    <property type="match status" value="1"/>
</dbReference>
<dbReference type="Gene3D" id="2.40.50.140">
    <property type="entry name" value="Nucleic acid-binding proteins"/>
    <property type="match status" value="1"/>
</dbReference>
<dbReference type="HAMAP" id="MF_00075">
    <property type="entry name" value="IF_1"/>
    <property type="match status" value="1"/>
</dbReference>
<dbReference type="InterPro" id="IPR012340">
    <property type="entry name" value="NA-bd_OB-fold"/>
</dbReference>
<dbReference type="InterPro" id="IPR006196">
    <property type="entry name" value="RNA-binding_domain_S1_IF1"/>
</dbReference>
<dbReference type="InterPro" id="IPR003029">
    <property type="entry name" value="S1_domain"/>
</dbReference>
<dbReference type="InterPro" id="IPR004368">
    <property type="entry name" value="TIF_IF1"/>
</dbReference>
<dbReference type="NCBIfam" id="TIGR00008">
    <property type="entry name" value="infA"/>
    <property type="match status" value="1"/>
</dbReference>
<dbReference type="PANTHER" id="PTHR33370">
    <property type="entry name" value="TRANSLATION INITIATION FACTOR IF-1, CHLOROPLASTIC"/>
    <property type="match status" value="1"/>
</dbReference>
<dbReference type="PANTHER" id="PTHR33370:SF1">
    <property type="entry name" value="TRANSLATION INITIATION FACTOR IF-1, CHLOROPLASTIC"/>
    <property type="match status" value="1"/>
</dbReference>
<dbReference type="Pfam" id="PF01176">
    <property type="entry name" value="eIF-1a"/>
    <property type="match status" value="1"/>
</dbReference>
<dbReference type="SMART" id="SM00316">
    <property type="entry name" value="S1"/>
    <property type="match status" value="1"/>
</dbReference>
<dbReference type="SUPFAM" id="SSF50249">
    <property type="entry name" value="Nucleic acid-binding proteins"/>
    <property type="match status" value="1"/>
</dbReference>
<dbReference type="PROSITE" id="PS50832">
    <property type="entry name" value="S1_IF1_TYPE"/>
    <property type="match status" value="1"/>
</dbReference>
<comment type="function">
    <text evidence="2">One of the essential components for the initiation of protein synthesis. Stabilizes the binding of IF-2 and IF-3 on the 30S subunit to which N-formylmethionyl-tRNA(fMet) subsequently binds. Helps modulate mRNA selection, yielding the 30S pre-initiation complex (PIC). Upon addition of the 50S ribosomal subunit IF-1, IF-2 and IF-3 are released leaving the mature 70S translation initiation complex.</text>
</comment>
<comment type="subunit">
    <text evidence="2">Component of the 30S ribosomal translation pre-initiation complex which assembles on the 30S ribosome in the order IF-2 and IF-3, IF-1 and N-formylmethionyl-tRNA(fMet); mRNA recruitment can occur at any time during PIC assembly.</text>
</comment>
<comment type="subcellular location">
    <subcellularLocation>
        <location evidence="2">Cytoplasm</location>
    </subcellularLocation>
</comment>
<comment type="similarity">
    <text evidence="2">Belongs to the IF-1 family.</text>
</comment>
<gene>
    <name evidence="2" type="primary">infA</name>
    <name type="ordered locus">PM1031</name>
</gene>
<organism>
    <name type="scientific">Pasteurella multocida (strain Pm70)</name>
    <dbReference type="NCBI Taxonomy" id="272843"/>
    <lineage>
        <taxon>Bacteria</taxon>
        <taxon>Pseudomonadati</taxon>
        <taxon>Pseudomonadota</taxon>
        <taxon>Gammaproteobacteria</taxon>
        <taxon>Pasteurellales</taxon>
        <taxon>Pasteurellaceae</taxon>
        <taxon>Pasteurella</taxon>
    </lineage>
</organism>
<reference key="1">
    <citation type="journal article" date="2001" name="Proc. Natl. Acad. Sci. U.S.A.">
        <title>Complete genomic sequence of Pasteurella multocida Pm70.</title>
        <authorList>
            <person name="May B.J."/>
            <person name="Zhang Q."/>
            <person name="Li L.L."/>
            <person name="Paustian M.L."/>
            <person name="Whittam T.S."/>
            <person name="Kapur V."/>
        </authorList>
    </citation>
    <scope>NUCLEOTIDE SEQUENCE [LARGE SCALE GENOMIC DNA]</scope>
    <source>
        <strain>Pm70</strain>
    </source>
</reference>
<proteinExistence type="inferred from homology"/>
<feature type="initiator methionine" description="Removed" evidence="1">
    <location>
        <position position="1"/>
    </location>
</feature>
<feature type="chain" id="PRO_0000095839" description="Translation initiation factor IF-1">
    <location>
        <begin position="2"/>
        <end position="72"/>
    </location>
</feature>
<feature type="domain" description="S1-like" evidence="2">
    <location>
        <begin position="2"/>
        <end position="72"/>
    </location>
</feature>
<name>IF1_PASMU</name>
<keyword id="KW-0963">Cytoplasm</keyword>
<keyword id="KW-0396">Initiation factor</keyword>
<keyword id="KW-0648">Protein biosynthesis</keyword>
<keyword id="KW-1185">Reference proteome</keyword>
<keyword id="KW-0694">RNA-binding</keyword>
<keyword id="KW-0699">rRNA-binding</keyword>
<evidence type="ECO:0000250" key="1"/>
<evidence type="ECO:0000255" key="2">
    <source>
        <dbReference type="HAMAP-Rule" id="MF_00075"/>
    </source>
</evidence>
<accession>P57898</accession>